<dbReference type="EMBL" id="AY821556">
    <property type="protein sequence ID" value="AAV70658.1"/>
    <property type="molecule type" value="mRNA"/>
</dbReference>
<dbReference type="RefSeq" id="NP_001028128.1">
    <property type="nucleotide sequence ID" value="NM_001032956.1"/>
</dbReference>
<dbReference type="SMR" id="Q5PXZ9"/>
<dbReference type="FunCoup" id="Q5PXZ9">
    <property type="interactions" value="625"/>
</dbReference>
<dbReference type="STRING" id="9544.ENSMMUP00000067268"/>
<dbReference type="MEROPS" id="I35.003"/>
<dbReference type="GlyCosmos" id="Q5PXZ9">
    <property type="glycosylation" value="1 site, No reported glycans"/>
</dbReference>
<dbReference type="PaxDb" id="9544-ENSMMUP00000008861"/>
<dbReference type="Ensembl" id="ENSMMUT00000097441.1">
    <property type="protein sequence ID" value="ENSMMUP00000067268.1"/>
    <property type="gene ID" value="ENSMMUG00000062825.1"/>
</dbReference>
<dbReference type="GeneID" id="574381"/>
<dbReference type="KEGG" id="mcc:574381"/>
<dbReference type="CTD" id="7078"/>
<dbReference type="VEuPathDB" id="HostDB:ENSMMUG00000062825"/>
<dbReference type="VGNC" id="VGNC:108066">
    <property type="gene designation" value="TIMP3"/>
</dbReference>
<dbReference type="eggNOG" id="KOG4745">
    <property type="taxonomic scope" value="Eukaryota"/>
</dbReference>
<dbReference type="GeneTree" id="ENSGT00940000159601"/>
<dbReference type="HOGENOM" id="CLU_084029_0_0_1"/>
<dbReference type="InParanoid" id="Q5PXZ9"/>
<dbReference type="OMA" id="PFGKCET"/>
<dbReference type="OrthoDB" id="6041373at2759"/>
<dbReference type="Proteomes" id="UP000006718">
    <property type="component" value="Chromosome 10"/>
</dbReference>
<dbReference type="Bgee" id="ENSMMUG00000062825">
    <property type="expression patterns" value="Expressed in lung and 21 other cell types or tissues"/>
</dbReference>
<dbReference type="ExpressionAtlas" id="Q5PXZ9">
    <property type="expression patterns" value="baseline and differential"/>
</dbReference>
<dbReference type="GO" id="GO:0005604">
    <property type="term" value="C:basement membrane"/>
    <property type="evidence" value="ECO:0007669"/>
    <property type="project" value="Ensembl"/>
</dbReference>
<dbReference type="GO" id="GO:0031012">
    <property type="term" value="C:extracellular matrix"/>
    <property type="evidence" value="ECO:0000318"/>
    <property type="project" value="GO_Central"/>
</dbReference>
<dbReference type="GO" id="GO:0005615">
    <property type="term" value="C:extracellular space"/>
    <property type="evidence" value="ECO:0000318"/>
    <property type="project" value="GO_Central"/>
</dbReference>
<dbReference type="GO" id="GO:0008191">
    <property type="term" value="F:metalloendopeptidase inhibitor activity"/>
    <property type="evidence" value="ECO:0000318"/>
    <property type="project" value="GO_Central"/>
</dbReference>
<dbReference type="GO" id="GO:0008270">
    <property type="term" value="F:zinc ion binding"/>
    <property type="evidence" value="ECO:0000250"/>
    <property type="project" value="UniProtKB"/>
</dbReference>
<dbReference type="GO" id="GO:0051045">
    <property type="term" value="P:negative regulation of membrane protein ectodomain proteolysis"/>
    <property type="evidence" value="ECO:0000318"/>
    <property type="project" value="GO_Central"/>
</dbReference>
<dbReference type="GO" id="GO:0034097">
    <property type="term" value="P:response to cytokine"/>
    <property type="evidence" value="ECO:0000318"/>
    <property type="project" value="GO_Central"/>
</dbReference>
<dbReference type="GO" id="GO:0009725">
    <property type="term" value="P:response to hormone"/>
    <property type="evidence" value="ECO:0000318"/>
    <property type="project" value="GO_Central"/>
</dbReference>
<dbReference type="CDD" id="cd03585">
    <property type="entry name" value="NTR_TIMP"/>
    <property type="match status" value="1"/>
</dbReference>
<dbReference type="FunFam" id="3.90.370.10:FF:000001">
    <property type="entry name" value="Metalloproteinase inhibitor 3"/>
    <property type="match status" value="1"/>
</dbReference>
<dbReference type="FunFam" id="2.40.50.120:FF:000005">
    <property type="entry name" value="Metalloproteinase inhibitor 3 precursor"/>
    <property type="match status" value="1"/>
</dbReference>
<dbReference type="Gene3D" id="2.40.50.120">
    <property type="match status" value="1"/>
</dbReference>
<dbReference type="Gene3D" id="3.90.370.10">
    <property type="entry name" value="Tissue inhibitor of metalloproteinase-1. Chain B, domain 1"/>
    <property type="match status" value="1"/>
</dbReference>
<dbReference type="InterPro" id="IPR001134">
    <property type="entry name" value="Netrin_domain"/>
</dbReference>
<dbReference type="InterPro" id="IPR001820">
    <property type="entry name" value="TIMP"/>
</dbReference>
<dbReference type="InterPro" id="IPR008993">
    <property type="entry name" value="TIMP-like_OB-fold"/>
</dbReference>
<dbReference type="InterPro" id="IPR027465">
    <property type="entry name" value="TIMP_C"/>
</dbReference>
<dbReference type="InterPro" id="IPR030490">
    <property type="entry name" value="TIMP_CS"/>
</dbReference>
<dbReference type="PANTHER" id="PTHR11844">
    <property type="entry name" value="METALLOPROTEASE INHIBITOR"/>
    <property type="match status" value="1"/>
</dbReference>
<dbReference type="PANTHER" id="PTHR11844:SF22">
    <property type="entry name" value="METALLOPROTEINASE INHIBITOR 3"/>
    <property type="match status" value="1"/>
</dbReference>
<dbReference type="Pfam" id="PF00965">
    <property type="entry name" value="TIMP"/>
    <property type="match status" value="1"/>
</dbReference>
<dbReference type="SMART" id="SM00206">
    <property type="entry name" value="NTR"/>
    <property type="match status" value="1"/>
</dbReference>
<dbReference type="SUPFAM" id="SSF50242">
    <property type="entry name" value="TIMP-like"/>
    <property type="match status" value="1"/>
</dbReference>
<dbReference type="PROSITE" id="PS50189">
    <property type="entry name" value="NTR"/>
    <property type="match status" value="1"/>
</dbReference>
<dbReference type="PROSITE" id="PS00288">
    <property type="entry name" value="TIMP"/>
    <property type="match status" value="1"/>
</dbReference>
<feature type="signal peptide" evidence="1">
    <location>
        <begin position="1"/>
        <end position="23"/>
    </location>
</feature>
<feature type="chain" id="PRO_0000034343" description="Metalloproteinase inhibitor 3">
    <location>
        <begin position="24"/>
        <end position="211"/>
    </location>
</feature>
<feature type="domain" description="NTR" evidence="6">
    <location>
        <begin position="24"/>
        <end position="143"/>
    </location>
</feature>
<feature type="region of interest" description="Involved in metalloproteinase-binding" evidence="2">
    <location>
        <begin position="24"/>
        <end position="27"/>
    </location>
</feature>
<feature type="region of interest" description="Involved in metalloproteinase-binding" evidence="2">
    <location>
        <begin position="88"/>
        <end position="89"/>
    </location>
</feature>
<feature type="region of interest" description="Mediates interaction with EFEMP1" evidence="1">
    <location>
        <begin position="105"/>
        <end position="188"/>
    </location>
</feature>
<feature type="binding site" evidence="2">
    <location>
        <position position="24"/>
    </location>
    <ligand>
        <name>Zn(2+)</name>
        <dbReference type="ChEBI" id="CHEBI:29105"/>
        <note>ligand shared with metalloproteinase partner</note>
    </ligand>
</feature>
<feature type="site" description="Involved in metalloproteinase-binding" evidence="2">
    <location>
        <position position="37"/>
    </location>
</feature>
<feature type="glycosylation site" description="N-linked (GlcNAc...) asparagine" evidence="5">
    <location>
        <position position="207"/>
    </location>
</feature>
<feature type="disulfide bond" evidence="6">
    <location>
        <begin position="24"/>
        <end position="91"/>
    </location>
</feature>
<feature type="disulfide bond" evidence="6">
    <location>
        <begin position="26"/>
        <end position="118"/>
    </location>
</feature>
<feature type="disulfide bond" evidence="6">
    <location>
        <begin position="36"/>
        <end position="143"/>
    </location>
</feature>
<feature type="disulfide bond" evidence="6">
    <location>
        <begin position="145"/>
        <end position="192"/>
    </location>
</feature>
<feature type="disulfide bond" evidence="6">
    <location>
        <begin position="150"/>
        <end position="155"/>
    </location>
</feature>
<feature type="disulfide bond" evidence="6">
    <location>
        <begin position="163"/>
        <end position="184"/>
    </location>
</feature>
<sequence>MTPWLGLIVLLGSWSLGDWGAEACTCSPSHPQDAFCNSDIVIRAKVVGKKLVKEGPFGTLVYTIKQMKMYRGFTKMPHVQYIHTEASESLCGLKLEVNKYQYLLTGRVYDGKMYTGLCNFVERWDQLTLSQRKGLNYRYHLGCNCKIKSCYYLPCFVTSKNECLWTDMLSNFGYPGYQSKHYACIRQKGGYCSWYRGWAPPDKSIINATDP</sequence>
<comment type="function">
    <text evidence="3 4">Mediates a variety of processes including matrix regulation and turnover, inflammation, and angiogenesis, through reversible inhibition of zinc protease superfamily enzymes, primarily matrix metalloproteinases (MMPs). Regulates extracellular matrix (ECM) remodeling through inhibition of matrix metalloproteinases (MMP) including MMP-1, MMP-2, MMP-3, MMP-7, MMP-9, MMP-13, MMP-14 and MMP-15. Additionally, modulates the processing of amyloid precursor protein (APP) and apolipoprotein E receptor ApoER2 by inhibiting two alpha-secretases ADAM10 and ADAM17. Functions as a tumor suppressor and a potent inhibitor of angiogenesis. Exerts its anti-angiogenic effect by directly interacting with vascular endothelial growth factor (VEGF) receptor-2/KDR, preventing its binding to the VEGFA ligand. Selectively induces apoptosis in angiogenic endothelial cells through a caspase-independent cell death pathway. Mechanistically, inhibits matrix-induced focal adhesion kinase PTK2 tyrosine phosphorylation and association with paxillin/PXN and disrupts the incorporation of ITGB3, PTK2 and PXN into focal adhesion contacts on the matrix.</text>
</comment>
<comment type="subunit">
    <text evidence="3">Interacts with EFEMP1. Interacts with KDR.</text>
</comment>
<comment type="subcellular location">
    <subcellularLocation>
        <location evidence="3">Secreted</location>
        <location evidence="3">Extracellular space</location>
        <location evidence="3">Extracellular matrix</location>
    </subcellularLocation>
</comment>
<comment type="similarity">
    <text evidence="7">Belongs to the protease inhibitor I35 (TIMP) family.</text>
</comment>
<name>TIMP3_MACMU</name>
<organism>
    <name type="scientific">Macaca mulatta</name>
    <name type="common">Rhesus macaque</name>
    <dbReference type="NCBI Taxonomy" id="9544"/>
    <lineage>
        <taxon>Eukaryota</taxon>
        <taxon>Metazoa</taxon>
        <taxon>Chordata</taxon>
        <taxon>Craniata</taxon>
        <taxon>Vertebrata</taxon>
        <taxon>Euteleostomi</taxon>
        <taxon>Mammalia</taxon>
        <taxon>Eutheria</taxon>
        <taxon>Euarchontoglires</taxon>
        <taxon>Primates</taxon>
        <taxon>Haplorrhini</taxon>
        <taxon>Catarrhini</taxon>
        <taxon>Cercopithecidae</taxon>
        <taxon>Cercopithecinae</taxon>
        <taxon>Macaca</taxon>
    </lineage>
</organism>
<gene>
    <name type="primary">TIMP3</name>
</gene>
<evidence type="ECO:0000250" key="1"/>
<evidence type="ECO:0000250" key="2">
    <source>
        <dbReference type="UniProtKB" id="P16035"/>
    </source>
</evidence>
<evidence type="ECO:0000250" key="3">
    <source>
        <dbReference type="UniProtKB" id="P35625"/>
    </source>
</evidence>
<evidence type="ECO:0000250" key="4">
    <source>
        <dbReference type="UniProtKB" id="P39876"/>
    </source>
</evidence>
<evidence type="ECO:0000255" key="5"/>
<evidence type="ECO:0000255" key="6">
    <source>
        <dbReference type="PROSITE-ProRule" id="PRU00295"/>
    </source>
</evidence>
<evidence type="ECO:0000305" key="7"/>
<protein>
    <recommendedName>
        <fullName>Metalloproteinase inhibitor 3</fullName>
    </recommendedName>
    <alternativeName>
        <fullName>Tissue inhibitor of metalloproteinases 3</fullName>
        <shortName>TIMP-3</shortName>
    </alternativeName>
</protein>
<accession>Q5PXZ9</accession>
<reference key="1">
    <citation type="submission" date="2004-11" db="EMBL/GenBank/DDBJ databases">
        <title>TIMP3 DNA sequence from Rhesus monkey endometrium.</title>
        <authorList>
            <person name="Cao W.G."/>
            <person name="Jia Y.B."/>
            <person name="Slayden O.D."/>
            <person name="Mah K."/>
            <person name="Brenner R.M."/>
        </authorList>
    </citation>
    <scope>NUCLEOTIDE SEQUENCE [MRNA]</scope>
</reference>
<proteinExistence type="evidence at transcript level"/>
<keyword id="KW-1015">Disulfide bond</keyword>
<keyword id="KW-0272">Extracellular matrix</keyword>
<keyword id="KW-0325">Glycoprotein</keyword>
<keyword id="KW-0479">Metal-binding</keyword>
<keyword id="KW-0481">Metalloenzyme inhibitor</keyword>
<keyword id="KW-0483">Metalloprotease inhibitor</keyword>
<keyword id="KW-0646">Protease inhibitor</keyword>
<keyword id="KW-1185">Reference proteome</keyword>
<keyword id="KW-0964">Secreted</keyword>
<keyword id="KW-0732">Signal</keyword>
<keyword id="KW-0862">Zinc</keyword>